<dbReference type="EC" id="3.5.1.98"/>
<dbReference type="EMBL" id="Z71255">
    <property type="protein sequence ID" value="CAA94976.1"/>
    <property type="molecule type" value="Genomic_DNA"/>
</dbReference>
<dbReference type="EMBL" id="Z49219">
    <property type="protein sequence ID" value="CAA89185.1"/>
    <property type="molecule type" value="Genomic_DNA"/>
</dbReference>
<dbReference type="EMBL" id="BK006949">
    <property type="protein sequence ID" value="DAA11488.1"/>
    <property type="molecule type" value="Genomic_DNA"/>
</dbReference>
<dbReference type="PIR" id="S54089">
    <property type="entry name" value="S54089"/>
</dbReference>
<dbReference type="RefSeq" id="NP_015393.1">
    <property type="nucleotide sequence ID" value="NM_001184165.1"/>
</dbReference>
<dbReference type="SMR" id="Q12214"/>
<dbReference type="BioGRID" id="36240">
    <property type="interactions" value="108"/>
</dbReference>
<dbReference type="DIP" id="DIP-7974N"/>
<dbReference type="FunCoup" id="Q12214">
    <property type="interactions" value="55"/>
</dbReference>
<dbReference type="IntAct" id="Q12214">
    <property type="interactions" value="4"/>
</dbReference>
<dbReference type="STRING" id="4932.YPR068C"/>
<dbReference type="iPTMnet" id="Q12214"/>
<dbReference type="PaxDb" id="4932-YPR068C"/>
<dbReference type="PeptideAtlas" id="Q12214"/>
<dbReference type="EnsemblFungi" id="YPR068C_mRNA">
    <property type="protein sequence ID" value="YPR068C"/>
    <property type="gene ID" value="YPR068C"/>
</dbReference>
<dbReference type="GeneID" id="856181"/>
<dbReference type="KEGG" id="sce:YPR068C"/>
<dbReference type="AGR" id="SGD:S000006272"/>
<dbReference type="SGD" id="S000006272">
    <property type="gene designation" value="HOS1"/>
</dbReference>
<dbReference type="VEuPathDB" id="FungiDB:YPR068C"/>
<dbReference type="eggNOG" id="KOG1342">
    <property type="taxonomic scope" value="Eukaryota"/>
</dbReference>
<dbReference type="GeneTree" id="ENSGT00940000157843"/>
<dbReference type="HOGENOM" id="CLU_007727_7_8_1"/>
<dbReference type="InParanoid" id="Q12214"/>
<dbReference type="OMA" id="MSRFYTY"/>
<dbReference type="OrthoDB" id="73273at2759"/>
<dbReference type="BioCyc" id="YEAST:G3O-34216-MONOMER"/>
<dbReference type="Reactome" id="R-SCE-2500257">
    <property type="pathway name" value="Resolution of Sister Chromatid Cohesion"/>
</dbReference>
<dbReference type="Reactome" id="R-SCE-3214815">
    <property type="pathway name" value="HDACs deacetylate histones"/>
</dbReference>
<dbReference type="BioGRID-ORCS" id="856181">
    <property type="hits" value="0 hits in 10 CRISPR screens"/>
</dbReference>
<dbReference type="PRO" id="PR:Q12214"/>
<dbReference type="Proteomes" id="UP000002311">
    <property type="component" value="Chromosome XVI"/>
</dbReference>
<dbReference type="RNAct" id="Q12214">
    <property type="molecule type" value="protein"/>
</dbReference>
<dbReference type="GO" id="GO:0000118">
    <property type="term" value="C:histone deacetylase complex"/>
    <property type="evidence" value="ECO:0000353"/>
    <property type="project" value="SGD"/>
</dbReference>
<dbReference type="GO" id="GO:0004407">
    <property type="term" value="F:histone deacetylase activity"/>
    <property type="evidence" value="ECO:0000318"/>
    <property type="project" value="GO_Central"/>
</dbReference>
<dbReference type="GO" id="GO:0141221">
    <property type="term" value="F:histone deacetylase activity, hydrolytic mechanism"/>
    <property type="evidence" value="ECO:0007669"/>
    <property type="project" value="UniProtKB-EC"/>
</dbReference>
<dbReference type="GO" id="GO:0033558">
    <property type="term" value="F:protein lysine deacetylase activity"/>
    <property type="evidence" value="ECO:0000314"/>
    <property type="project" value="SGD"/>
</dbReference>
<dbReference type="GO" id="GO:0031507">
    <property type="term" value="P:heterochromatin formation"/>
    <property type="evidence" value="ECO:0000318"/>
    <property type="project" value="GO_Central"/>
</dbReference>
<dbReference type="GO" id="GO:0045944">
    <property type="term" value="P:positive regulation of transcription by RNA polymerase II"/>
    <property type="evidence" value="ECO:0000315"/>
    <property type="project" value="SGD"/>
</dbReference>
<dbReference type="CDD" id="cd11680">
    <property type="entry name" value="HDAC_Hos1"/>
    <property type="match status" value="1"/>
</dbReference>
<dbReference type="Gene3D" id="3.40.800.20">
    <property type="entry name" value="Histone deacetylase domain"/>
    <property type="match status" value="1"/>
</dbReference>
<dbReference type="InterPro" id="IPR050284">
    <property type="entry name" value="HDAC_PDAC"/>
</dbReference>
<dbReference type="InterPro" id="IPR000286">
    <property type="entry name" value="His_deacetylse"/>
</dbReference>
<dbReference type="InterPro" id="IPR023801">
    <property type="entry name" value="His_deacetylse_dom"/>
</dbReference>
<dbReference type="InterPro" id="IPR037138">
    <property type="entry name" value="His_deacetylse_dom_sf"/>
</dbReference>
<dbReference type="InterPro" id="IPR023696">
    <property type="entry name" value="Ureohydrolase_dom_sf"/>
</dbReference>
<dbReference type="PANTHER" id="PTHR10625:SF14">
    <property type="entry name" value="HISTONE DEACETYLASE 8"/>
    <property type="match status" value="1"/>
</dbReference>
<dbReference type="PANTHER" id="PTHR10625">
    <property type="entry name" value="HISTONE DEACETYLASE HDAC1-RELATED"/>
    <property type="match status" value="1"/>
</dbReference>
<dbReference type="Pfam" id="PF00850">
    <property type="entry name" value="Hist_deacetyl"/>
    <property type="match status" value="1"/>
</dbReference>
<dbReference type="PRINTS" id="PR01270">
    <property type="entry name" value="HDASUPER"/>
</dbReference>
<dbReference type="SUPFAM" id="SSF52768">
    <property type="entry name" value="Arginase/deacetylase"/>
    <property type="match status" value="1"/>
</dbReference>
<proteinExistence type="evidence at protein level"/>
<feature type="chain" id="PRO_0000114726" description="Histone deacetylase HOS1">
    <location>
        <begin position="1"/>
        <end position="470"/>
    </location>
</feature>
<feature type="region of interest" description="Histone deacetylase">
    <location>
        <begin position="47"/>
        <end position="392"/>
    </location>
</feature>
<feature type="active site" evidence="1">
    <location>
        <position position="211"/>
    </location>
</feature>
<feature type="modified residue" description="Phosphoserine" evidence="4">
    <location>
        <position position="110"/>
    </location>
</feature>
<comment type="function">
    <text evidence="1">Responsible for the deacetylation of lysine residues on the N-terminal part of the core histones (H2A, H2B, H3 and H4). Histone deacetylation plays an important role in transcriptional regulation, cell cycle progression and developmental events. Histone deacetylases act via the formation of large multiprotein complexes (By similarity).</text>
</comment>
<comment type="catalytic activity">
    <reaction>
        <text>N(6)-acetyl-L-lysyl-[histone] + H2O = L-lysyl-[histone] + acetate</text>
        <dbReference type="Rhea" id="RHEA:58196"/>
        <dbReference type="Rhea" id="RHEA-COMP:9845"/>
        <dbReference type="Rhea" id="RHEA-COMP:11338"/>
        <dbReference type="ChEBI" id="CHEBI:15377"/>
        <dbReference type="ChEBI" id="CHEBI:29969"/>
        <dbReference type="ChEBI" id="CHEBI:30089"/>
        <dbReference type="ChEBI" id="CHEBI:61930"/>
        <dbReference type="EC" id="3.5.1.98"/>
    </reaction>
</comment>
<comment type="subcellular location">
    <subcellularLocation>
        <location evidence="1">Nucleus</location>
    </subcellularLocation>
</comment>
<comment type="miscellaneous">
    <text evidence="2">Present with 538 molecules/cell in log phase SD medium.</text>
</comment>
<comment type="similarity">
    <text evidence="3">Belongs to the histone deacetylase family. HD type 1 subfamily.</text>
</comment>
<sequence length="470" mass="54764">MSKLVISTSIFQSQVADLLPCNNHQKSQLTYSLINAYDLLQHFDEVLTFPYARKDDLLEFHSKSYIDYLINGRFNKMMAQDVNNPMVESKWSELSELADNWNEKIDYNPSQDLQRFTTRENLYNYYLNHSQALENNMDCINNSEVPTNDKPTDTYILNSETKQYNLEGDCPIFSYLPMYCQVITGATLNLLDHLSPTERLIGINWDGGRHHAFKQRASGFCYINDVVLLIQRLRKAKLNKITYVDFDLHHGDGVEKAFQYSKQIQTISVHLYEPGFFPGTGSLSDSRKDKNVVNIPLKHGCDDNYLELIASKIVNPLIERHEPEALIIECGGDGLLGDRFNEWQLTIRGLSRIIINIMKSYPRAHIFLLGGGGYNDLLMSRFYTYLTWCVTKQFSNLRCGDNNSFQIDPFDVCDGDDSEQFIREHDLVEMYNEENYQYWIYEMEGSSRMKMLRNDNKDRDMVELMKFYEL</sequence>
<reference key="1">
    <citation type="journal article" date="1997" name="Nature">
        <title>The nucleotide sequence of Saccharomyces cerevisiae chromosome XVI.</title>
        <authorList>
            <person name="Bussey H."/>
            <person name="Storms R.K."/>
            <person name="Ahmed A."/>
            <person name="Albermann K."/>
            <person name="Allen E."/>
            <person name="Ansorge W."/>
            <person name="Araujo R."/>
            <person name="Aparicio A."/>
            <person name="Barrell B.G."/>
            <person name="Badcock K."/>
            <person name="Benes V."/>
            <person name="Botstein D."/>
            <person name="Bowman S."/>
            <person name="Brueckner M."/>
            <person name="Carpenter J."/>
            <person name="Cherry J.M."/>
            <person name="Chung E."/>
            <person name="Churcher C.M."/>
            <person name="Coster F."/>
            <person name="Davis K."/>
            <person name="Davis R.W."/>
            <person name="Dietrich F.S."/>
            <person name="Delius H."/>
            <person name="DiPaolo T."/>
            <person name="Dubois E."/>
            <person name="Duesterhoeft A."/>
            <person name="Duncan M."/>
            <person name="Floeth M."/>
            <person name="Fortin N."/>
            <person name="Friesen J.D."/>
            <person name="Fritz C."/>
            <person name="Goffeau A."/>
            <person name="Hall J."/>
            <person name="Hebling U."/>
            <person name="Heumann K."/>
            <person name="Hilbert H."/>
            <person name="Hillier L.W."/>
            <person name="Hunicke-Smith S."/>
            <person name="Hyman R.W."/>
            <person name="Johnston M."/>
            <person name="Kalman S."/>
            <person name="Kleine K."/>
            <person name="Komp C."/>
            <person name="Kurdi O."/>
            <person name="Lashkari D."/>
            <person name="Lew H."/>
            <person name="Lin A."/>
            <person name="Lin D."/>
            <person name="Louis E.J."/>
            <person name="Marathe R."/>
            <person name="Messenguy F."/>
            <person name="Mewes H.-W."/>
            <person name="Mirtipati S."/>
            <person name="Moestl D."/>
            <person name="Mueller-Auer S."/>
            <person name="Namath A."/>
            <person name="Nentwich U."/>
            <person name="Oefner P."/>
            <person name="Pearson D."/>
            <person name="Petel F.X."/>
            <person name="Pohl T.M."/>
            <person name="Purnelle B."/>
            <person name="Rajandream M.A."/>
            <person name="Rechmann S."/>
            <person name="Rieger M."/>
            <person name="Riles L."/>
            <person name="Roberts D."/>
            <person name="Schaefer M."/>
            <person name="Scharfe M."/>
            <person name="Scherens B."/>
            <person name="Schramm S."/>
            <person name="Schroeder M."/>
            <person name="Sdicu A.-M."/>
            <person name="Tettelin H."/>
            <person name="Urrestarazu L.A."/>
            <person name="Ushinsky S."/>
            <person name="Vierendeels F."/>
            <person name="Vissers S."/>
            <person name="Voss H."/>
            <person name="Walsh S.V."/>
            <person name="Wambutt R."/>
            <person name="Wang Y."/>
            <person name="Wedler E."/>
            <person name="Wedler H."/>
            <person name="Winnett E."/>
            <person name="Zhong W.-W."/>
            <person name="Zollner A."/>
            <person name="Vo D.H."/>
            <person name="Hani J."/>
        </authorList>
    </citation>
    <scope>NUCLEOTIDE SEQUENCE [LARGE SCALE GENOMIC DNA]</scope>
    <source>
        <strain>ATCC 204508 / S288c</strain>
    </source>
</reference>
<reference key="2">
    <citation type="journal article" date="2014" name="G3 (Bethesda)">
        <title>The reference genome sequence of Saccharomyces cerevisiae: Then and now.</title>
        <authorList>
            <person name="Engel S.R."/>
            <person name="Dietrich F.S."/>
            <person name="Fisk D.G."/>
            <person name="Binkley G."/>
            <person name="Balakrishnan R."/>
            <person name="Costanzo M.C."/>
            <person name="Dwight S.S."/>
            <person name="Hitz B.C."/>
            <person name="Karra K."/>
            <person name="Nash R.S."/>
            <person name="Weng S."/>
            <person name="Wong E.D."/>
            <person name="Lloyd P."/>
            <person name="Skrzypek M.S."/>
            <person name="Miyasato S.R."/>
            <person name="Simison M."/>
            <person name="Cherry J.M."/>
        </authorList>
    </citation>
    <scope>GENOME REANNOTATION</scope>
    <source>
        <strain>ATCC 204508 / S288c</strain>
    </source>
</reference>
<reference key="3">
    <citation type="journal article" date="1996" name="Proc. Natl. Acad. Sci. U.S.A.">
        <title>HDA1 and RPD3 are members of distinct yeast histone deacetylase complexes that regulate silencing and transcription.</title>
        <authorList>
            <person name="Rundlett S.E."/>
            <person name="Carmen A.A."/>
            <person name="Kobayashi R."/>
            <person name="Bavykin S."/>
            <person name="Turner B.M."/>
            <person name="Grunstein M."/>
        </authorList>
    </citation>
    <scope>GENE NAME</scope>
</reference>
<reference key="4">
    <citation type="journal article" date="2003" name="Nature">
        <title>Global analysis of protein expression in yeast.</title>
        <authorList>
            <person name="Ghaemmaghami S."/>
            <person name="Huh W.-K."/>
            <person name="Bower K."/>
            <person name="Howson R.W."/>
            <person name="Belle A."/>
            <person name="Dephoure N."/>
            <person name="O'Shea E.K."/>
            <person name="Weissman J.S."/>
        </authorList>
    </citation>
    <scope>LEVEL OF PROTEIN EXPRESSION [LARGE SCALE ANALYSIS]</scope>
</reference>
<reference key="5">
    <citation type="journal article" date="2008" name="Mol. Cell. Proteomics">
        <title>A multidimensional chromatography technology for in-depth phosphoproteome analysis.</title>
        <authorList>
            <person name="Albuquerque C.P."/>
            <person name="Smolka M.B."/>
            <person name="Payne S.H."/>
            <person name="Bafna V."/>
            <person name="Eng J."/>
            <person name="Zhou H."/>
        </authorList>
    </citation>
    <scope>PHOSPHORYLATION [LARGE SCALE ANALYSIS] AT SER-110</scope>
    <scope>IDENTIFICATION BY MASS SPECTROMETRY [LARGE SCALE ANALYSIS]</scope>
</reference>
<name>HOS1_YEAST</name>
<protein>
    <recommendedName>
        <fullName>Histone deacetylase HOS1</fullName>
        <ecNumber>3.5.1.98</ecNumber>
    </recommendedName>
</protein>
<evidence type="ECO:0000250" key="1"/>
<evidence type="ECO:0000269" key="2">
    <source>
    </source>
</evidence>
<evidence type="ECO:0000305" key="3"/>
<evidence type="ECO:0007744" key="4">
    <source>
    </source>
</evidence>
<accession>Q12214</accession>
<accession>D6W472</accession>
<gene>
    <name type="primary">HOS1</name>
    <name type="ordered locus">YPR068C</name>
    <name type="ORF">YP9499.23C</name>
</gene>
<keyword id="KW-0156">Chromatin regulator</keyword>
<keyword id="KW-0378">Hydrolase</keyword>
<keyword id="KW-0539">Nucleus</keyword>
<keyword id="KW-0597">Phosphoprotein</keyword>
<keyword id="KW-1185">Reference proteome</keyword>
<keyword id="KW-0678">Repressor</keyword>
<keyword id="KW-0804">Transcription</keyword>
<keyword id="KW-0805">Transcription regulation</keyword>
<organism>
    <name type="scientific">Saccharomyces cerevisiae (strain ATCC 204508 / S288c)</name>
    <name type="common">Baker's yeast</name>
    <dbReference type="NCBI Taxonomy" id="559292"/>
    <lineage>
        <taxon>Eukaryota</taxon>
        <taxon>Fungi</taxon>
        <taxon>Dikarya</taxon>
        <taxon>Ascomycota</taxon>
        <taxon>Saccharomycotina</taxon>
        <taxon>Saccharomycetes</taxon>
        <taxon>Saccharomycetales</taxon>
        <taxon>Saccharomycetaceae</taxon>
        <taxon>Saccharomyces</taxon>
    </lineage>
</organism>